<evidence type="ECO:0000255" key="1">
    <source>
        <dbReference type="HAMAP-Rule" id="MF_00185"/>
    </source>
</evidence>
<sequence>MTEQLPLALFLMGPTASGKTELAIRLRQRYPVELISVDSALIYKGMDIGTAKPDEREQQLAPHRLIDILDPTEAYSAADFRRDALAAMNEIVAQGKIPLLVGGTMLYFKALLEGLSPLPAANAEIRQQIEQEALTKGWSVLHDELQEIDPVSAARIHPNDPQRLSRALEVYRISGKTLTELTETKGESLPFRVKQFAIAPKERAELHRRIELRFDKMMEAGFEQEMRALYTRKDLHPDLPSIRCVGYRQMWDYLDGNCTLDEAIYRGICATRQLAKRQITWLRSWDNLTWLDSENIEQSLETLSEAIASDRDSCV</sequence>
<organism>
    <name type="scientific">Vibrio vulnificus (strain CMCP6)</name>
    <dbReference type="NCBI Taxonomy" id="216895"/>
    <lineage>
        <taxon>Bacteria</taxon>
        <taxon>Pseudomonadati</taxon>
        <taxon>Pseudomonadota</taxon>
        <taxon>Gammaproteobacteria</taxon>
        <taxon>Vibrionales</taxon>
        <taxon>Vibrionaceae</taxon>
        <taxon>Vibrio</taxon>
    </lineage>
</organism>
<name>MIAA_VIBVU</name>
<keyword id="KW-0067">ATP-binding</keyword>
<keyword id="KW-0460">Magnesium</keyword>
<keyword id="KW-0547">Nucleotide-binding</keyword>
<keyword id="KW-0808">Transferase</keyword>
<keyword id="KW-0819">tRNA processing</keyword>
<protein>
    <recommendedName>
        <fullName evidence="1">tRNA dimethylallyltransferase</fullName>
        <ecNumber evidence="1">2.5.1.75</ecNumber>
    </recommendedName>
    <alternativeName>
        <fullName evidence="1">Dimethylallyl diphosphate:tRNA dimethylallyltransferase</fullName>
        <shortName evidence="1">DMAPP:tRNA dimethylallyltransferase</shortName>
        <shortName evidence="1">DMATase</shortName>
    </alternativeName>
    <alternativeName>
        <fullName evidence="1">Isopentenyl-diphosphate:tRNA isopentenyltransferase</fullName>
        <shortName evidence="1">IPP transferase</shortName>
        <shortName evidence="1">IPPT</shortName>
        <shortName evidence="1">IPTase</shortName>
    </alternativeName>
</protein>
<feature type="chain" id="PRO_0000164004" description="tRNA dimethylallyltransferase">
    <location>
        <begin position="1"/>
        <end position="315"/>
    </location>
</feature>
<feature type="region of interest" description="Interaction with substrate tRNA" evidence="1">
    <location>
        <begin position="38"/>
        <end position="41"/>
    </location>
</feature>
<feature type="region of interest" description="Interaction with substrate tRNA" evidence="1">
    <location>
        <begin position="162"/>
        <end position="166"/>
    </location>
</feature>
<feature type="region of interest" description="Interaction with substrate tRNA" evidence="1">
    <location>
        <begin position="243"/>
        <end position="248"/>
    </location>
</feature>
<feature type="region of interest" description="Interaction with substrate tRNA" evidence="1">
    <location>
        <begin position="276"/>
        <end position="283"/>
    </location>
</feature>
<feature type="binding site" evidence="1">
    <location>
        <begin position="13"/>
        <end position="20"/>
    </location>
    <ligand>
        <name>ATP</name>
        <dbReference type="ChEBI" id="CHEBI:30616"/>
    </ligand>
</feature>
<feature type="binding site" evidence="1">
    <location>
        <begin position="15"/>
        <end position="20"/>
    </location>
    <ligand>
        <name>substrate</name>
    </ligand>
</feature>
<feature type="site" description="Interaction with substrate tRNA" evidence="1">
    <location>
        <position position="104"/>
    </location>
</feature>
<feature type="site" description="Interaction with substrate tRNA" evidence="1">
    <location>
        <position position="126"/>
    </location>
</feature>
<dbReference type="EC" id="2.5.1.75" evidence="1"/>
<dbReference type="EMBL" id="AE016795">
    <property type="protein sequence ID" value="AAO09748.2"/>
    <property type="molecule type" value="Genomic_DNA"/>
</dbReference>
<dbReference type="RefSeq" id="WP_011079275.1">
    <property type="nucleotide sequence ID" value="NC_004459.3"/>
</dbReference>
<dbReference type="SMR" id="Q8CWK9"/>
<dbReference type="KEGG" id="vvu:VV1_1293"/>
<dbReference type="HOGENOM" id="CLU_032616_0_0_6"/>
<dbReference type="Proteomes" id="UP000002275">
    <property type="component" value="Chromosome 1"/>
</dbReference>
<dbReference type="GO" id="GO:0005524">
    <property type="term" value="F:ATP binding"/>
    <property type="evidence" value="ECO:0007669"/>
    <property type="project" value="UniProtKB-UniRule"/>
</dbReference>
<dbReference type="GO" id="GO:0052381">
    <property type="term" value="F:tRNA dimethylallyltransferase activity"/>
    <property type="evidence" value="ECO:0007669"/>
    <property type="project" value="UniProtKB-UniRule"/>
</dbReference>
<dbReference type="GO" id="GO:0006400">
    <property type="term" value="P:tRNA modification"/>
    <property type="evidence" value="ECO:0007669"/>
    <property type="project" value="TreeGrafter"/>
</dbReference>
<dbReference type="FunFam" id="1.10.20.140:FF:000001">
    <property type="entry name" value="tRNA dimethylallyltransferase"/>
    <property type="match status" value="1"/>
</dbReference>
<dbReference type="Gene3D" id="1.10.20.140">
    <property type="match status" value="1"/>
</dbReference>
<dbReference type="Gene3D" id="3.40.50.300">
    <property type="entry name" value="P-loop containing nucleotide triphosphate hydrolases"/>
    <property type="match status" value="1"/>
</dbReference>
<dbReference type="HAMAP" id="MF_00185">
    <property type="entry name" value="IPP_trans"/>
    <property type="match status" value="1"/>
</dbReference>
<dbReference type="InterPro" id="IPR039657">
    <property type="entry name" value="Dimethylallyltransferase"/>
</dbReference>
<dbReference type="InterPro" id="IPR018022">
    <property type="entry name" value="IPT"/>
</dbReference>
<dbReference type="InterPro" id="IPR027417">
    <property type="entry name" value="P-loop_NTPase"/>
</dbReference>
<dbReference type="NCBIfam" id="TIGR00174">
    <property type="entry name" value="miaA"/>
    <property type="match status" value="1"/>
</dbReference>
<dbReference type="PANTHER" id="PTHR11088">
    <property type="entry name" value="TRNA DIMETHYLALLYLTRANSFERASE"/>
    <property type="match status" value="1"/>
</dbReference>
<dbReference type="PANTHER" id="PTHR11088:SF60">
    <property type="entry name" value="TRNA DIMETHYLALLYLTRANSFERASE"/>
    <property type="match status" value="1"/>
</dbReference>
<dbReference type="Pfam" id="PF01715">
    <property type="entry name" value="IPPT"/>
    <property type="match status" value="1"/>
</dbReference>
<dbReference type="SUPFAM" id="SSF52540">
    <property type="entry name" value="P-loop containing nucleoside triphosphate hydrolases"/>
    <property type="match status" value="1"/>
</dbReference>
<gene>
    <name evidence="1" type="primary">miaA</name>
    <name type="ordered locus">VV1_1293</name>
</gene>
<reference key="1">
    <citation type="submission" date="2002-12" db="EMBL/GenBank/DDBJ databases">
        <title>Complete genome sequence of Vibrio vulnificus CMCP6.</title>
        <authorList>
            <person name="Rhee J.H."/>
            <person name="Kim S.Y."/>
            <person name="Chung S.S."/>
            <person name="Kim J.J."/>
            <person name="Moon Y.H."/>
            <person name="Jeong H."/>
            <person name="Choy H.E."/>
        </authorList>
    </citation>
    <scope>NUCLEOTIDE SEQUENCE [LARGE SCALE GENOMIC DNA]</scope>
    <source>
        <strain>CMCP6</strain>
    </source>
</reference>
<accession>Q8CWK9</accession>
<comment type="function">
    <text evidence="1">Catalyzes the transfer of a dimethylallyl group onto the adenine at position 37 in tRNAs that read codons beginning with uridine, leading to the formation of N6-(dimethylallyl)adenosine (i(6)A).</text>
</comment>
<comment type="catalytic activity">
    <reaction evidence="1">
        <text>adenosine(37) in tRNA + dimethylallyl diphosphate = N(6)-dimethylallyladenosine(37) in tRNA + diphosphate</text>
        <dbReference type="Rhea" id="RHEA:26482"/>
        <dbReference type="Rhea" id="RHEA-COMP:10162"/>
        <dbReference type="Rhea" id="RHEA-COMP:10375"/>
        <dbReference type="ChEBI" id="CHEBI:33019"/>
        <dbReference type="ChEBI" id="CHEBI:57623"/>
        <dbReference type="ChEBI" id="CHEBI:74411"/>
        <dbReference type="ChEBI" id="CHEBI:74415"/>
        <dbReference type="EC" id="2.5.1.75"/>
    </reaction>
</comment>
<comment type="cofactor">
    <cofactor evidence="1">
        <name>Mg(2+)</name>
        <dbReference type="ChEBI" id="CHEBI:18420"/>
    </cofactor>
</comment>
<comment type="subunit">
    <text evidence="1">Monomer.</text>
</comment>
<comment type="similarity">
    <text evidence="1">Belongs to the IPP transferase family.</text>
</comment>
<proteinExistence type="inferred from homology"/>